<reference key="1">
    <citation type="journal article" date="2006" name="PLoS Genet.">
        <title>The complete genome sequence and comparative genome analysis of the high pathogenicity Yersinia enterocolitica strain 8081.</title>
        <authorList>
            <person name="Thomson N.R."/>
            <person name="Howard S."/>
            <person name="Wren B.W."/>
            <person name="Holden M.T.G."/>
            <person name="Crossman L."/>
            <person name="Challis G.L."/>
            <person name="Churcher C."/>
            <person name="Mungall K."/>
            <person name="Brooks K."/>
            <person name="Chillingworth T."/>
            <person name="Feltwell T."/>
            <person name="Abdellah Z."/>
            <person name="Hauser H."/>
            <person name="Jagels K."/>
            <person name="Maddison M."/>
            <person name="Moule S."/>
            <person name="Sanders M."/>
            <person name="Whitehead S."/>
            <person name="Quail M.A."/>
            <person name="Dougan G."/>
            <person name="Parkhill J."/>
            <person name="Prentice M.B."/>
        </authorList>
    </citation>
    <scope>NUCLEOTIDE SEQUENCE [LARGE SCALE GENOMIC DNA]</scope>
    <source>
        <strain>NCTC 13174 / 8081</strain>
    </source>
</reference>
<proteinExistence type="inferred from homology"/>
<organism>
    <name type="scientific">Yersinia enterocolitica serotype O:8 / biotype 1B (strain NCTC 13174 / 8081)</name>
    <dbReference type="NCBI Taxonomy" id="393305"/>
    <lineage>
        <taxon>Bacteria</taxon>
        <taxon>Pseudomonadati</taxon>
        <taxon>Pseudomonadota</taxon>
        <taxon>Gammaproteobacteria</taxon>
        <taxon>Enterobacterales</taxon>
        <taxon>Yersiniaceae</taxon>
        <taxon>Yersinia</taxon>
    </lineage>
</organism>
<sequence length="92" mass="10211">MAKVCIAAYVYGVVQGVGFRYSTQRQALALGVTGYARNCDDGSVEVVAYGEQQAVEQLMEWIKQGGPRGARVDRLLTEPYPATPFETFKIRY</sequence>
<keyword id="KW-0378">Hydrolase</keyword>
<evidence type="ECO:0000255" key="1">
    <source>
        <dbReference type="HAMAP-Rule" id="MF_01450"/>
    </source>
</evidence>
<accession>A1JMX0</accession>
<protein>
    <recommendedName>
        <fullName evidence="1">Acylphosphatase</fullName>
        <ecNumber evidence="1">3.6.1.7</ecNumber>
    </recommendedName>
    <alternativeName>
        <fullName evidence="1">Acylphosphate phosphohydrolase</fullName>
    </alternativeName>
</protein>
<feature type="chain" id="PRO_0000326851" description="Acylphosphatase">
    <location>
        <begin position="1"/>
        <end position="92"/>
    </location>
</feature>
<feature type="domain" description="Acylphosphatase-like" evidence="1">
    <location>
        <begin position="5"/>
        <end position="92"/>
    </location>
</feature>
<feature type="active site" evidence="1">
    <location>
        <position position="20"/>
    </location>
</feature>
<feature type="active site" evidence="1">
    <location>
        <position position="38"/>
    </location>
</feature>
<name>ACYP_YERE8</name>
<gene>
    <name type="primary">acyP</name>
    <name type="ordered locus">YE1596</name>
</gene>
<comment type="catalytic activity">
    <reaction evidence="1">
        <text>an acyl phosphate + H2O = a carboxylate + phosphate + H(+)</text>
        <dbReference type="Rhea" id="RHEA:14965"/>
        <dbReference type="ChEBI" id="CHEBI:15377"/>
        <dbReference type="ChEBI" id="CHEBI:15378"/>
        <dbReference type="ChEBI" id="CHEBI:29067"/>
        <dbReference type="ChEBI" id="CHEBI:43474"/>
        <dbReference type="ChEBI" id="CHEBI:59918"/>
        <dbReference type="EC" id="3.6.1.7"/>
    </reaction>
</comment>
<comment type="similarity">
    <text evidence="1">Belongs to the acylphosphatase family.</text>
</comment>
<dbReference type="EC" id="3.6.1.7" evidence="1"/>
<dbReference type="EMBL" id="AM286415">
    <property type="protein sequence ID" value="CAL11673.1"/>
    <property type="molecule type" value="Genomic_DNA"/>
</dbReference>
<dbReference type="RefSeq" id="YP_001005889.1">
    <property type="nucleotide sequence ID" value="NC_008800.1"/>
</dbReference>
<dbReference type="SMR" id="A1JMX0"/>
<dbReference type="KEGG" id="yen:YE1596"/>
<dbReference type="PATRIC" id="fig|393305.7.peg.1726"/>
<dbReference type="eggNOG" id="COG1254">
    <property type="taxonomic scope" value="Bacteria"/>
</dbReference>
<dbReference type="HOGENOM" id="CLU_141932_1_2_6"/>
<dbReference type="OrthoDB" id="5295388at2"/>
<dbReference type="Proteomes" id="UP000000642">
    <property type="component" value="Chromosome"/>
</dbReference>
<dbReference type="GO" id="GO:0003998">
    <property type="term" value="F:acylphosphatase activity"/>
    <property type="evidence" value="ECO:0007669"/>
    <property type="project" value="UniProtKB-UniRule"/>
</dbReference>
<dbReference type="Gene3D" id="3.30.70.100">
    <property type="match status" value="1"/>
</dbReference>
<dbReference type="HAMAP" id="MF_01450">
    <property type="entry name" value="Acylphosphatase_entero"/>
    <property type="match status" value="1"/>
</dbReference>
<dbReference type="InterPro" id="IPR020456">
    <property type="entry name" value="Acylphosphatase"/>
</dbReference>
<dbReference type="InterPro" id="IPR001792">
    <property type="entry name" value="Acylphosphatase-like_dom"/>
</dbReference>
<dbReference type="InterPro" id="IPR036046">
    <property type="entry name" value="Acylphosphatase-like_dom_sf"/>
</dbReference>
<dbReference type="InterPro" id="IPR028627">
    <property type="entry name" value="Acylphosphatase_bac"/>
</dbReference>
<dbReference type="InterPro" id="IPR017968">
    <property type="entry name" value="Acylphosphatase_CS"/>
</dbReference>
<dbReference type="NCBIfam" id="NF011000">
    <property type="entry name" value="PRK14426.1"/>
    <property type="match status" value="1"/>
</dbReference>
<dbReference type="PANTHER" id="PTHR47268">
    <property type="entry name" value="ACYLPHOSPHATASE"/>
    <property type="match status" value="1"/>
</dbReference>
<dbReference type="PANTHER" id="PTHR47268:SF4">
    <property type="entry name" value="ACYLPHOSPHATASE"/>
    <property type="match status" value="1"/>
</dbReference>
<dbReference type="Pfam" id="PF00708">
    <property type="entry name" value="Acylphosphatase"/>
    <property type="match status" value="1"/>
</dbReference>
<dbReference type="PRINTS" id="PR00112">
    <property type="entry name" value="ACYLPHPHTASE"/>
</dbReference>
<dbReference type="SUPFAM" id="SSF54975">
    <property type="entry name" value="Acylphosphatase/BLUF domain-like"/>
    <property type="match status" value="1"/>
</dbReference>
<dbReference type="PROSITE" id="PS00150">
    <property type="entry name" value="ACYLPHOSPHATASE_1"/>
    <property type="match status" value="1"/>
</dbReference>
<dbReference type="PROSITE" id="PS00151">
    <property type="entry name" value="ACYLPHOSPHATASE_2"/>
    <property type="match status" value="1"/>
</dbReference>
<dbReference type="PROSITE" id="PS51160">
    <property type="entry name" value="ACYLPHOSPHATASE_3"/>
    <property type="match status" value="1"/>
</dbReference>